<keyword id="KW-0143">Chaperone</keyword>
<keyword id="KW-0963">Cytoplasm</keyword>
<keyword id="KW-1185">Reference proteome</keyword>
<keyword id="KW-0346">Stress response</keyword>
<protein>
    <recommendedName>
        <fullName evidence="1">Protein GrpE</fullName>
    </recommendedName>
    <alternativeName>
        <fullName evidence="1">HSP-70 cofactor</fullName>
    </alternativeName>
</protein>
<gene>
    <name evidence="1" type="primary">grpE</name>
    <name type="ordered locus">VF_1996</name>
</gene>
<sequence>MSNEENKVNEEAVVEEQVEAVGTEADVEWNESAEDSQEAKIAELEAALLASQAQVKEQQDTVLRAKAEEQNVRRRAEEDVDKARKYALKKFAGELLPVLDNLERALESGDKENEAAKALLEGVELTLQTFVSTVEKFGLTVINPMGEAFNPELHQAIGMQASPDHESNTVMIVMQKGYTLNDQVLRPAMVMVAQ</sequence>
<accession>Q5E3A5</accession>
<organism>
    <name type="scientific">Aliivibrio fischeri (strain ATCC 700601 / ES114)</name>
    <name type="common">Vibrio fischeri</name>
    <dbReference type="NCBI Taxonomy" id="312309"/>
    <lineage>
        <taxon>Bacteria</taxon>
        <taxon>Pseudomonadati</taxon>
        <taxon>Pseudomonadota</taxon>
        <taxon>Gammaproteobacteria</taxon>
        <taxon>Vibrionales</taxon>
        <taxon>Vibrionaceae</taxon>
        <taxon>Aliivibrio</taxon>
    </lineage>
</organism>
<name>GRPE_ALIF1</name>
<comment type="function">
    <text evidence="1">Participates actively in the response to hyperosmotic and heat shock by preventing the aggregation of stress-denatured proteins, in association with DnaK and GrpE. It is the nucleotide exchange factor for DnaK and may function as a thermosensor. Unfolded proteins bind initially to DnaJ; upon interaction with the DnaJ-bound protein, DnaK hydrolyzes its bound ATP, resulting in the formation of a stable complex. GrpE releases ADP from DnaK; ATP binding to DnaK triggers the release of the substrate protein, thus completing the reaction cycle. Several rounds of ATP-dependent interactions between DnaJ, DnaK and GrpE are required for fully efficient folding.</text>
</comment>
<comment type="subunit">
    <text evidence="1">Homodimer.</text>
</comment>
<comment type="subcellular location">
    <subcellularLocation>
        <location evidence="1">Cytoplasm</location>
    </subcellularLocation>
</comment>
<comment type="similarity">
    <text evidence="1">Belongs to the GrpE family.</text>
</comment>
<dbReference type="EMBL" id="CP000020">
    <property type="protein sequence ID" value="AAW86491.1"/>
    <property type="molecule type" value="Genomic_DNA"/>
</dbReference>
<dbReference type="RefSeq" id="WP_011262458.1">
    <property type="nucleotide sequence ID" value="NC_006840.2"/>
</dbReference>
<dbReference type="RefSeq" id="YP_205379.1">
    <property type="nucleotide sequence ID" value="NC_006840.2"/>
</dbReference>
<dbReference type="SMR" id="Q5E3A5"/>
<dbReference type="STRING" id="312309.VF_1996"/>
<dbReference type="EnsemblBacteria" id="AAW86491">
    <property type="protein sequence ID" value="AAW86491"/>
    <property type="gene ID" value="VF_1996"/>
</dbReference>
<dbReference type="GeneID" id="54164692"/>
<dbReference type="KEGG" id="vfi:VF_1996"/>
<dbReference type="PATRIC" id="fig|312309.11.peg.2023"/>
<dbReference type="eggNOG" id="COG0576">
    <property type="taxonomic scope" value="Bacteria"/>
</dbReference>
<dbReference type="HOGENOM" id="CLU_057217_6_0_6"/>
<dbReference type="OrthoDB" id="9789811at2"/>
<dbReference type="Proteomes" id="UP000000537">
    <property type="component" value="Chromosome I"/>
</dbReference>
<dbReference type="GO" id="GO:0005829">
    <property type="term" value="C:cytosol"/>
    <property type="evidence" value="ECO:0007669"/>
    <property type="project" value="TreeGrafter"/>
</dbReference>
<dbReference type="GO" id="GO:0000774">
    <property type="term" value="F:adenyl-nucleotide exchange factor activity"/>
    <property type="evidence" value="ECO:0007669"/>
    <property type="project" value="InterPro"/>
</dbReference>
<dbReference type="GO" id="GO:0042803">
    <property type="term" value="F:protein homodimerization activity"/>
    <property type="evidence" value="ECO:0007669"/>
    <property type="project" value="InterPro"/>
</dbReference>
<dbReference type="GO" id="GO:0051087">
    <property type="term" value="F:protein-folding chaperone binding"/>
    <property type="evidence" value="ECO:0007669"/>
    <property type="project" value="InterPro"/>
</dbReference>
<dbReference type="GO" id="GO:0051082">
    <property type="term" value="F:unfolded protein binding"/>
    <property type="evidence" value="ECO:0007669"/>
    <property type="project" value="TreeGrafter"/>
</dbReference>
<dbReference type="GO" id="GO:0006457">
    <property type="term" value="P:protein folding"/>
    <property type="evidence" value="ECO:0007669"/>
    <property type="project" value="InterPro"/>
</dbReference>
<dbReference type="CDD" id="cd00446">
    <property type="entry name" value="GrpE"/>
    <property type="match status" value="1"/>
</dbReference>
<dbReference type="FunFam" id="2.30.22.10:FF:000001">
    <property type="entry name" value="Protein GrpE"/>
    <property type="match status" value="1"/>
</dbReference>
<dbReference type="Gene3D" id="3.90.20.20">
    <property type="match status" value="1"/>
</dbReference>
<dbReference type="Gene3D" id="2.30.22.10">
    <property type="entry name" value="Head domain of nucleotide exchange factor GrpE"/>
    <property type="match status" value="1"/>
</dbReference>
<dbReference type="HAMAP" id="MF_01151">
    <property type="entry name" value="GrpE"/>
    <property type="match status" value="1"/>
</dbReference>
<dbReference type="InterPro" id="IPR000740">
    <property type="entry name" value="GrpE"/>
</dbReference>
<dbReference type="InterPro" id="IPR013805">
    <property type="entry name" value="GrpE_coiled_coil"/>
</dbReference>
<dbReference type="InterPro" id="IPR009012">
    <property type="entry name" value="GrpE_head"/>
</dbReference>
<dbReference type="NCBIfam" id="NF010737">
    <property type="entry name" value="PRK14139.1"/>
    <property type="match status" value="1"/>
</dbReference>
<dbReference type="NCBIfam" id="NF010738">
    <property type="entry name" value="PRK14140.1"/>
    <property type="match status" value="1"/>
</dbReference>
<dbReference type="NCBIfam" id="NF010748">
    <property type="entry name" value="PRK14150.1"/>
    <property type="match status" value="1"/>
</dbReference>
<dbReference type="PANTHER" id="PTHR21237">
    <property type="entry name" value="GRPE PROTEIN"/>
    <property type="match status" value="1"/>
</dbReference>
<dbReference type="PANTHER" id="PTHR21237:SF23">
    <property type="entry name" value="GRPE PROTEIN HOMOLOG, MITOCHONDRIAL"/>
    <property type="match status" value="1"/>
</dbReference>
<dbReference type="Pfam" id="PF01025">
    <property type="entry name" value="GrpE"/>
    <property type="match status" value="1"/>
</dbReference>
<dbReference type="PRINTS" id="PR00773">
    <property type="entry name" value="GRPEPROTEIN"/>
</dbReference>
<dbReference type="SUPFAM" id="SSF58014">
    <property type="entry name" value="Coiled-coil domain of nucleotide exchange factor GrpE"/>
    <property type="match status" value="1"/>
</dbReference>
<dbReference type="SUPFAM" id="SSF51064">
    <property type="entry name" value="Head domain of nucleotide exchange factor GrpE"/>
    <property type="match status" value="1"/>
</dbReference>
<dbReference type="PROSITE" id="PS01071">
    <property type="entry name" value="GRPE"/>
    <property type="match status" value="1"/>
</dbReference>
<evidence type="ECO:0000255" key="1">
    <source>
        <dbReference type="HAMAP-Rule" id="MF_01151"/>
    </source>
</evidence>
<reference key="1">
    <citation type="journal article" date="2005" name="Proc. Natl. Acad. Sci. U.S.A.">
        <title>Complete genome sequence of Vibrio fischeri: a symbiotic bacterium with pathogenic congeners.</title>
        <authorList>
            <person name="Ruby E.G."/>
            <person name="Urbanowski M."/>
            <person name="Campbell J."/>
            <person name="Dunn A."/>
            <person name="Faini M."/>
            <person name="Gunsalus R."/>
            <person name="Lostroh P."/>
            <person name="Lupp C."/>
            <person name="McCann J."/>
            <person name="Millikan D."/>
            <person name="Schaefer A."/>
            <person name="Stabb E."/>
            <person name="Stevens A."/>
            <person name="Visick K."/>
            <person name="Whistler C."/>
            <person name="Greenberg E.P."/>
        </authorList>
    </citation>
    <scope>NUCLEOTIDE SEQUENCE [LARGE SCALE GENOMIC DNA]</scope>
    <source>
        <strain>ATCC 700601 / ES114</strain>
    </source>
</reference>
<proteinExistence type="inferred from homology"/>
<feature type="chain" id="PRO_1000053659" description="Protein GrpE">
    <location>
        <begin position="1"/>
        <end position="194"/>
    </location>
</feature>